<protein>
    <recommendedName>
        <fullName evidence="1">Thymidine phosphorylase</fullName>
        <ecNumber evidence="1">2.4.2.4</ecNumber>
    </recommendedName>
    <alternativeName>
        <fullName evidence="1">TdRPase</fullName>
    </alternativeName>
</protein>
<feature type="chain" id="PRO_0000059057" description="Thymidine phosphorylase">
    <location>
        <begin position="1"/>
        <end position="446"/>
    </location>
</feature>
<keyword id="KW-0328">Glycosyltransferase</keyword>
<keyword id="KW-1185">Reference proteome</keyword>
<keyword id="KW-0808">Transferase</keyword>
<comment type="function">
    <text evidence="1">The enzymes which catalyze the reversible phosphorolysis of pyrimidine nucleosides are involved in the degradation of these compounds and in their utilization as carbon and energy sources, or in the rescue of pyrimidine bases for nucleotide synthesis.</text>
</comment>
<comment type="catalytic activity">
    <reaction evidence="1">
        <text>thymidine + phosphate = 2-deoxy-alpha-D-ribose 1-phosphate + thymine</text>
        <dbReference type="Rhea" id="RHEA:16037"/>
        <dbReference type="ChEBI" id="CHEBI:17748"/>
        <dbReference type="ChEBI" id="CHEBI:17821"/>
        <dbReference type="ChEBI" id="CHEBI:43474"/>
        <dbReference type="ChEBI" id="CHEBI:57259"/>
        <dbReference type="EC" id="2.4.2.4"/>
    </reaction>
</comment>
<comment type="pathway">
    <text evidence="1">Pyrimidine metabolism; dTMP biosynthesis via salvage pathway; dTMP from thymine: step 1/2.</text>
</comment>
<comment type="subunit">
    <text evidence="1">Homodimer.</text>
</comment>
<comment type="similarity">
    <text evidence="1">Belongs to the thymidine/pyrimidine-nucleoside phosphorylase family.</text>
</comment>
<accession>Q5QXT8</accession>
<gene>
    <name evidence="1" type="primary">deoA</name>
    <name type="ordered locus">IL1882</name>
</gene>
<sequence>MFLAQEVIRKKRDAVSLSDTDIQQFVNGICDDSVSEGQIAALAMAIYFRGMSAQEKTALTVAMRDSGDVLDWRQDNLNGPVLDKHSTGGVGDVVSLMLGPIVAACGGYVPMISGRGLGHTGGTLDKFDAIPGYQTAPDNRRFRDTVKQAGVAIIGQTGRLAPADSRFYATRDVTATVESIPLITASILAKKLAEGLDGLVMDVKAGNGAFMPGYDESRELAQSLVSVGRKLGVETTALITDMNQALGSAAGNAVEVQLAVDYLTGKRRDKRLHQVTKALSAELLVSGNLAKSTDQAEVMVENVLGSGLAAERFAKMVGSLGGPHDFLEKSDQYLPQANLRKPLKLPAEYHGLYLSEVNTRELGMAVVCLGGGRRKADDKLDLSVGMTDILTVGSKVDSESVIATVHASNESDWQEAADSILKALSFSSTPPEPDSVIYERIAGETE</sequence>
<evidence type="ECO:0000255" key="1">
    <source>
        <dbReference type="HAMAP-Rule" id="MF_01628"/>
    </source>
</evidence>
<dbReference type="EC" id="2.4.2.4" evidence="1"/>
<dbReference type="EMBL" id="AE017340">
    <property type="protein sequence ID" value="AAV82714.1"/>
    <property type="molecule type" value="Genomic_DNA"/>
</dbReference>
<dbReference type="RefSeq" id="WP_011235114.1">
    <property type="nucleotide sequence ID" value="NC_006512.1"/>
</dbReference>
<dbReference type="SMR" id="Q5QXT8"/>
<dbReference type="STRING" id="283942.IL1882"/>
<dbReference type="GeneID" id="41337066"/>
<dbReference type="KEGG" id="ilo:IL1882"/>
<dbReference type="eggNOG" id="COG0213">
    <property type="taxonomic scope" value="Bacteria"/>
</dbReference>
<dbReference type="HOGENOM" id="CLU_025040_0_1_6"/>
<dbReference type="OrthoDB" id="9763887at2"/>
<dbReference type="UniPathway" id="UPA00578">
    <property type="reaction ID" value="UER00638"/>
</dbReference>
<dbReference type="Proteomes" id="UP000001171">
    <property type="component" value="Chromosome"/>
</dbReference>
<dbReference type="GO" id="GO:0005829">
    <property type="term" value="C:cytosol"/>
    <property type="evidence" value="ECO:0007669"/>
    <property type="project" value="TreeGrafter"/>
</dbReference>
<dbReference type="GO" id="GO:0004645">
    <property type="term" value="F:1,4-alpha-oligoglucan phosphorylase activity"/>
    <property type="evidence" value="ECO:0007669"/>
    <property type="project" value="InterPro"/>
</dbReference>
<dbReference type="GO" id="GO:0009032">
    <property type="term" value="F:thymidine phosphorylase activity"/>
    <property type="evidence" value="ECO:0007669"/>
    <property type="project" value="UniProtKB-UniRule"/>
</dbReference>
<dbReference type="GO" id="GO:0006206">
    <property type="term" value="P:pyrimidine nucleobase metabolic process"/>
    <property type="evidence" value="ECO:0007669"/>
    <property type="project" value="InterPro"/>
</dbReference>
<dbReference type="GO" id="GO:0046104">
    <property type="term" value="P:thymidine metabolic process"/>
    <property type="evidence" value="ECO:0007669"/>
    <property type="project" value="UniProtKB-UniRule"/>
</dbReference>
<dbReference type="FunFam" id="3.40.1030.10:FF:000001">
    <property type="entry name" value="Thymidine phosphorylase"/>
    <property type="match status" value="1"/>
</dbReference>
<dbReference type="Gene3D" id="3.40.1030.10">
    <property type="entry name" value="Nucleoside phosphorylase/phosphoribosyltransferase catalytic domain"/>
    <property type="match status" value="1"/>
</dbReference>
<dbReference type="Gene3D" id="3.90.1170.30">
    <property type="entry name" value="Pyrimidine nucleoside phosphorylase-like, C-terminal domain"/>
    <property type="match status" value="1"/>
</dbReference>
<dbReference type="Gene3D" id="1.20.970.10">
    <property type="entry name" value="Transferase, Pyrimidine Nucleoside Phosphorylase, Chain C"/>
    <property type="match status" value="1"/>
</dbReference>
<dbReference type="HAMAP" id="MF_01628">
    <property type="entry name" value="Thymid_phosp"/>
    <property type="match status" value="1"/>
</dbReference>
<dbReference type="InterPro" id="IPR000312">
    <property type="entry name" value="Glycosyl_Trfase_fam3"/>
</dbReference>
<dbReference type="InterPro" id="IPR017459">
    <property type="entry name" value="Glycosyl_Trfase_fam3_N_dom"/>
</dbReference>
<dbReference type="InterPro" id="IPR036320">
    <property type="entry name" value="Glycosyl_Trfase_fam3_N_dom_sf"/>
</dbReference>
<dbReference type="InterPro" id="IPR035902">
    <property type="entry name" value="Nuc_phospho_transferase"/>
</dbReference>
<dbReference type="InterPro" id="IPR036566">
    <property type="entry name" value="PYNP-like_C_sf"/>
</dbReference>
<dbReference type="InterPro" id="IPR013102">
    <property type="entry name" value="PYNP_C"/>
</dbReference>
<dbReference type="InterPro" id="IPR018090">
    <property type="entry name" value="Pyrmidine_PPas_bac/euk"/>
</dbReference>
<dbReference type="InterPro" id="IPR017872">
    <property type="entry name" value="Pyrmidine_PPase_CS"/>
</dbReference>
<dbReference type="InterPro" id="IPR000053">
    <property type="entry name" value="Thymidine/pyrmidine_PPase"/>
</dbReference>
<dbReference type="InterPro" id="IPR013465">
    <property type="entry name" value="Thymidine_Pase"/>
</dbReference>
<dbReference type="NCBIfam" id="NF004490">
    <property type="entry name" value="PRK05820.1"/>
    <property type="match status" value="1"/>
</dbReference>
<dbReference type="NCBIfam" id="TIGR02643">
    <property type="entry name" value="T_phosphoryl"/>
    <property type="match status" value="1"/>
</dbReference>
<dbReference type="NCBIfam" id="TIGR02644">
    <property type="entry name" value="Y_phosphoryl"/>
    <property type="match status" value="1"/>
</dbReference>
<dbReference type="PANTHER" id="PTHR10515">
    <property type="entry name" value="THYMIDINE PHOSPHORYLASE"/>
    <property type="match status" value="1"/>
</dbReference>
<dbReference type="PANTHER" id="PTHR10515:SF0">
    <property type="entry name" value="THYMIDINE PHOSPHORYLASE"/>
    <property type="match status" value="1"/>
</dbReference>
<dbReference type="Pfam" id="PF02885">
    <property type="entry name" value="Glycos_trans_3N"/>
    <property type="match status" value="1"/>
</dbReference>
<dbReference type="Pfam" id="PF00591">
    <property type="entry name" value="Glycos_transf_3"/>
    <property type="match status" value="1"/>
</dbReference>
<dbReference type="Pfam" id="PF07831">
    <property type="entry name" value="PYNP_C"/>
    <property type="match status" value="1"/>
</dbReference>
<dbReference type="PIRSF" id="PIRSF000478">
    <property type="entry name" value="TP_PyNP"/>
    <property type="match status" value="1"/>
</dbReference>
<dbReference type="SMART" id="SM00941">
    <property type="entry name" value="PYNP_C"/>
    <property type="match status" value="1"/>
</dbReference>
<dbReference type="SUPFAM" id="SSF52418">
    <property type="entry name" value="Nucleoside phosphorylase/phosphoribosyltransferase catalytic domain"/>
    <property type="match status" value="1"/>
</dbReference>
<dbReference type="SUPFAM" id="SSF47648">
    <property type="entry name" value="Nucleoside phosphorylase/phosphoribosyltransferase N-terminal domain"/>
    <property type="match status" value="1"/>
</dbReference>
<dbReference type="SUPFAM" id="SSF54680">
    <property type="entry name" value="Pyrimidine nucleoside phosphorylase C-terminal domain"/>
    <property type="match status" value="1"/>
</dbReference>
<dbReference type="PROSITE" id="PS00647">
    <property type="entry name" value="THYMID_PHOSPHORYLASE"/>
    <property type="match status" value="1"/>
</dbReference>
<organism>
    <name type="scientific">Idiomarina loihiensis (strain ATCC BAA-735 / DSM 15497 / L2-TR)</name>
    <dbReference type="NCBI Taxonomy" id="283942"/>
    <lineage>
        <taxon>Bacteria</taxon>
        <taxon>Pseudomonadati</taxon>
        <taxon>Pseudomonadota</taxon>
        <taxon>Gammaproteobacteria</taxon>
        <taxon>Alteromonadales</taxon>
        <taxon>Idiomarinaceae</taxon>
        <taxon>Idiomarina</taxon>
    </lineage>
</organism>
<name>TYPH_IDILO</name>
<reference key="1">
    <citation type="journal article" date="2004" name="Proc. Natl. Acad. Sci. U.S.A.">
        <title>Genome sequence of the deep-sea gamma-proteobacterium Idiomarina loihiensis reveals amino acid fermentation as a source of carbon and energy.</title>
        <authorList>
            <person name="Hou S."/>
            <person name="Saw J.H."/>
            <person name="Lee K.S."/>
            <person name="Freitas T.A."/>
            <person name="Belisle C."/>
            <person name="Kawarabayasi Y."/>
            <person name="Donachie S.P."/>
            <person name="Pikina A."/>
            <person name="Galperin M.Y."/>
            <person name="Koonin E.V."/>
            <person name="Makarova K.S."/>
            <person name="Omelchenko M.V."/>
            <person name="Sorokin A."/>
            <person name="Wolf Y.I."/>
            <person name="Li Q.X."/>
            <person name="Keum Y.S."/>
            <person name="Campbell S."/>
            <person name="Denery J."/>
            <person name="Aizawa S."/>
            <person name="Shibata S."/>
            <person name="Malahoff A."/>
            <person name="Alam M."/>
        </authorList>
    </citation>
    <scope>NUCLEOTIDE SEQUENCE [LARGE SCALE GENOMIC DNA]</scope>
    <source>
        <strain>ATCC BAA-735 / DSM 15497 / L2-TR</strain>
    </source>
</reference>
<proteinExistence type="inferred from homology"/>